<name>DSEL_ARATH</name>
<accession>O49523</accession>
<accession>Q8GXS9</accession>
<keyword id="KW-0002">3D-structure</keyword>
<keyword id="KW-0175">Coiled coil</keyword>
<keyword id="KW-0963">Cytoplasm</keyword>
<keyword id="KW-0378">Hydrolase</keyword>
<keyword id="KW-0442">Lipid degradation</keyword>
<keyword id="KW-0443">Lipid metabolism</keyword>
<keyword id="KW-1185">Reference proteome</keyword>
<feature type="chain" id="PRO_0000409361" description="Phospholipase A1-IIgamma">
    <location>
        <begin position="1"/>
        <end position="419"/>
    </location>
</feature>
<feature type="coiled-coil region" evidence="2">
    <location>
        <begin position="1"/>
        <end position="21"/>
    </location>
</feature>
<feature type="coiled-coil region" evidence="2">
    <location>
        <begin position="207"/>
        <end position="227"/>
    </location>
</feature>
<feature type="active site" description="Acyl-ester intermediate" evidence="1">
    <location>
        <position position="236"/>
    </location>
</feature>
<feature type="active site" description="Charge relay system" evidence="1">
    <location>
        <position position="236"/>
    </location>
</feature>
<feature type="active site" description="Charge relay system" evidence="1">
    <location>
        <position position="302"/>
    </location>
</feature>
<feature type="active site" description="Charge relay system" evidence="1">
    <location>
        <position position="339"/>
    </location>
</feature>
<feature type="helix" evidence="5">
    <location>
        <begin position="18"/>
        <end position="26"/>
    </location>
</feature>
<feature type="turn" evidence="5">
    <location>
        <begin position="27"/>
        <end position="34"/>
    </location>
</feature>
<feature type="turn" evidence="5">
    <location>
        <begin position="36"/>
        <end position="39"/>
    </location>
</feature>
<feature type="helix" evidence="5">
    <location>
        <begin position="41"/>
        <end position="60"/>
    </location>
</feature>
<feature type="turn" evidence="5">
    <location>
        <begin position="68"/>
        <end position="71"/>
    </location>
</feature>
<feature type="strand" evidence="5">
    <location>
        <begin position="72"/>
        <end position="75"/>
    </location>
</feature>
<feature type="helix" evidence="5">
    <location>
        <begin position="80"/>
        <end position="83"/>
    </location>
</feature>
<feature type="strand" evidence="5">
    <location>
        <begin position="95"/>
        <end position="103"/>
    </location>
</feature>
<feature type="turn" evidence="5">
    <location>
        <begin position="111"/>
        <end position="113"/>
    </location>
</feature>
<feature type="strand" evidence="5">
    <location>
        <begin position="128"/>
        <end position="136"/>
    </location>
</feature>
<feature type="helix" evidence="5">
    <location>
        <begin position="138"/>
        <end position="144"/>
    </location>
</feature>
<feature type="strand" evidence="5">
    <location>
        <begin position="146"/>
        <end position="153"/>
    </location>
</feature>
<feature type="helix" evidence="5">
    <location>
        <begin position="163"/>
        <end position="166"/>
    </location>
</feature>
<feature type="strand" evidence="5">
    <location>
        <begin position="170"/>
        <end position="172"/>
    </location>
</feature>
<feature type="helix" evidence="5">
    <location>
        <begin position="174"/>
        <end position="177"/>
    </location>
</feature>
<feature type="helix" evidence="5">
    <location>
        <begin position="179"/>
        <end position="181"/>
    </location>
</feature>
<feature type="strand" evidence="5">
    <location>
        <begin position="185"/>
        <end position="187"/>
    </location>
</feature>
<feature type="helix" evidence="5">
    <location>
        <begin position="188"/>
        <end position="195"/>
    </location>
</feature>
<feature type="turn" evidence="5">
    <location>
        <begin position="202"/>
        <end position="204"/>
    </location>
</feature>
<feature type="helix" evidence="5">
    <location>
        <begin position="208"/>
        <end position="222"/>
    </location>
</feature>
<feature type="turn" evidence="5">
    <location>
        <begin position="223"/>
        <end position="225"/>
    </location>
</feature>
<feature type="strand" evidence="5">
    <location>
        <begin position="228"/>
        <end position="235"/>
    </location>
</feature>
<feature type="helix" evidence="5">
    <location>
        <begin position="237"/>
        <end position="251"/>
    </location>
</feature>
<feature type="turn" evidence="5">
    <location>
        <begin position="252"/>
        <end position="255"/>
    </location>
</feature>
<feature type="strand" evidence="5">
    <location>
        <begin position="267"/>
        <end position="273"/>
    </location>
</feature>
<feature type="helix" evidence="5">
    <location>
        <begin position="280"/>
        <end position="287"/>
    </location>
</feature>
<feature type="strand" evidence="5">
    <location>
        <begin position="292"/>
        <end position="299"/>
    </location>
</feature>
<feature type="helix" evidence="5">
    <location>
        <begin position="304"/>
        <end position="306"/>
    </location>
</feature>
<feature type="strand" evidence="5">
    <location>
        <begin position="316"/>
        <end position="321"/>
    </location>
</feature>
<feature type="helix" evidence="5">
    <location>
        <begin position="323"/>
        <end position="325"/>
    </location>
</feature>
<feature type="helix" evidence="5">
    <location>
        <begin position="335"/>
        <end position="339"/>
    </location>
</feature>
<feature type="helix" evidence="5">
    <location>
        <begin position="341"/>
        <end position="350"/>
    </location>
</feature>
<feature type="helix" evidence="5">
    <location>
        <begin position="368"/>
        <end position="373"/>
    </location>
</feature>
<feature type="helix" evidence="5">
    <location>
        <begin position="380"/>
        <end position="382"/>
    </location>
</feature>
<feature type="helix" evidence="5">
    <location>
        <begin position="392"/>
        <end position="395"/>
    </location>
</feature>
<feature type="strand" evidence="5">
    <location>
        <begin position="396"/>
        <end position="398"/>
    </location>
</feature>
<feature type="strand" evidence="5">
    <location>
        <begin position="404"/>
        <end position="406"/>
    </location>
</feature>
<proteinExistence type="evidence at protein level"/>
<dbReference type="EC" id="3.1.1.-"/>
<dbReference type="EMBL" id="AL021710">
    <property type="protein sequence ID" value="CAA16735.1"/>
    <property type="molecule type" value="Genomic_DNA"/>
</dbReference>
<dbReference type="EMBL" id="AL161548">
    <property type="protein sequence ID" value="CAB78857.1"/>
    <property type="molecule type" value="Genomic_DNA"/>
</dbReference>
<dbReference type="EMBL" id="CP002687">
    <property type="protein sequence ID" value="AEE84060.1"/>
    <property type="molecule type" value="Genomic_DNA"/>
</dbReference>
<dbReference type="EMBL" id="BT030056">
    <property type="protein sequence ID" value="ABN04794.1"/>
    <property type="molecule type" value="mRNA"/>
</dbReference>
<dbReference type="EMBL" id="AK118061">
    <property type="protein sequence ID" value="BAC42692.1"/>
    <property type="status" value="ALT_INIT"/>
    <property type="molecule type" value="mRNA"/>
</dbReference>
<dbReference type="PIR" id="T04551">
    <property type="entry name" value="T04551"/>
</dbReference>
<dbReference type="RefSeq" id="NP_193590.1">
    <property type="nucleotide sequence ID" value="NM_117969.3"/>
</dbReference>
<dbReference type="PDB" id="2YIJ">
    <property type="method" value="X-ray"/>
    <property type="resolution" value="2.00 A"/>
    <property type="chains" value="A/B=1-419"/>
</dbReference>
<dbReference type="PDB" id="7X0C">
    <property type="method" value="X-ray"/>
    <property type="resolution" value="1.80 A"/>
    <property type="chains" value="A/B=1-419"/>
</dbReference>
<dbReference type="PDBsum" id="2YIJ"/>
<dbReference type="PDBsum" id="7X0C"/>
<dbReference type="SMR" id="O49523"/>
<dbReference type="FunCoup" id="O49523">
    <property type="interactions" value="76"/>
</dbReference>
<dbReference type="STRING" id="3702.O49523"/>
<dbReference type="ESTHER" id="arath-At4g18550">
    <property type="family name" value="Plant_phospholipase"/>
</dbReference>
<dbReference type="PaxDb" id="3702-AT4G18550.1"/>
<dbReference type="ProteomicsDB" id="221911"/>
<dbReference type="EnsemblPlants" id="AT4G18550.1">
    <property type="protein sequence ID" value="AT4G18550.1"/>
    <property type="gene ID" value="AT4G18550"/>
</dbReference>
<dbReference type="GeneID" id="827587"/>
<dbReference type="Gramene" id="AT4G18550.1">
    <property type="protein sequence ID" value="AT4G18550.1"/>
    <property type="gene ID" value="AT4G18550"/>
</dbReference>
<dbReference type="KEGG" id="ath:AT4G18550"/>
<dbReference type="Araport" id="AT4G18550"/>
<dbReference type="TAIR" id="AT4G18550">
    <property type="gene designation" value="DSEL"/>
</dbReference>
<dbReference type="eggNOG" id="KOG4569">
    <property type="taxonomic scope" value="Eukaryota"/>
</dbReference>
<dbReference type="HOGENOM" id="CLU_018841_0_0_1"/>
<dbReference type="InParanoid" id="O49523"/>
<dbReference type="OrthoDB" id="438440at2759"/>
<dbReference type="PhylomeDB" id="O49523"/>
<dbReference type="BioCyc" id="ARA:AT4G18550-MONOMER"/>
<dbReference type="BioCyc" id="MetaCyc:AT4G18550-MONOMER"/>
<dbReference type="EvolutionaryTrace" id="O49523"/>
<dbReference type="PRO" id="PR:O49523"/>
<dbReference type="Proteomes" id="UP000006548">
    <property type="component" value="Chromosome 4"/>
</dbReference>
<dbReference type="ExpressionAtlas" id="O49523">
    <property type="expression patterns" value="baseline and differential"/>
</dbReference>
<dbReference type="GO" id="GO:0005737">
    <property type="term" value="C:cytoplasm"/>
    <property type="evidence" value="ECO:0000314"/>
    <property type="project" value="UniProtKB"/>
</dbReference>
<dbReference type="GO" id="GO:0047372">
    <property type="term" value="F:monoacylglycerol lipase activity"/>
    <property type="evidence" value="ECO:0000314"/>
    <property type="project" value="TAIR"/>
</dbReference>
<dbReference type="GO" id="GO:0008970">
    <property type="term" value="F:phospholipase A1 activity"/>
    <property type="evidence" value="ECO:0000314"/>
    <property type="project" value="UniProtKB"/>
</dbReference>
<dbReference type="GO" id="GO:0046340">
    <property type="term" value="P:diacylglycerol catabolic process"/>
    <property type="evidence" value="ECO:0000314"/>
    <property type="project" value="TAIR"/>
</dbReference>
<dbReference type="GO" id="GO:0019915">
    <property type="term" value="P:lipid storage"/>
    <property type="evidence" value="ECO:0000315"/>
    <property type="project" value="TAIR"/>
</dbReference>
<dbReference type="GO" id="GO:0052651">
    <property type="term" value="P:monoacylglycerol catabolic process"/>
    <property type="evidence" value="ECO:0000314"/>
    <property type="project" value="TAIR"/>
</dbReference>
<dbReference type="GO" id="GO:0010187">
    <property type="term" value="P:negative regulation of seed germination"/>
    <property type="evidence" value="ECO:0000315"/>
    <property type="project" value="UniProtKB"/>
</dbReference>
<dbReference type="CDD" id="cd00519">
    <property type="entry name" value="Lipase_3"/>
    <property type="match status" value="1"/>
</dbReference>
<dbReference type="FunFam" id="3.40.50.1820:FF:000065">
    <property type="entry name" value="Phospholipase A1-II 3"/>
    <property type="match status" value="1"/>
</dbReference>
<dbReference type="Gene3D" id="3.40.50.1820">
    <property type="entry name" value="alpha/beta hydrolase"/>
    <property type="match status" value="1"/>
</dbReference>
<dbReference type="InterPro" id="IPR029058">
    <property type="entry name" value="AB_hydrolase_fold"/>
</dbReference>
<dbReference type="InterPro" id="IPR002921">
    <property type="entry name" value="Fungal_lipase-type"/>
</dbReference>
<dbReference type="InterPro" id="IPR033556">
    <property type="entry name" value="PLA"/>
</dbReference>
<dbReference type="PANTHER" id="PTHR31828">
    <property type="entry name" value="PHOSPHOLIPASE A1-IIGAMMA"/>
    <property type="match status" value="1"/>
</dbReference>
<dbReference type="PANTHER" id="PTHR31828:SF1">
    <property type="entry name" value="PHOSPHOLIPASE A1-IIGAMMA"/>
    <property type="match status" value="1"/>
</dbReference>
<dbReference type="Pfam" id="PF01764">
    <property type="entry name" value="Lipase_3"/>
    <property type="match status" value="1"/>
</dbReference>
<dbReference type="SUPFAM" id="SSF53474">
    <property type="entry name" value="alpha/beta-Hydrolases"/>
    <property type="match status" value="1"/>
</dbReference>
<sequence>MKRKKKEEEEEKLIVTREFAKRWRDLSGQNHWKGMLQPLDQDLREYIIHYGEMAQAGYDTFNINTESQFAGASIYSRKDFFAKVGLEIAHPYTKYKVTKFIYATSDIHVPESFLLFPISREGWSKESNWMGYVAVTDDQGTALLGRRDIVVSWRGSVQPLEWVEDFEFGLVNAIKIFGERNDQVQIHQGWYSIYMSQDERSPFTKTNARDQVLREVGRLLEKYKDEEVSITICGHSLGAALATLSATDIVANGYNRPKSRPDKSCPVTAFVFASPRVGDSDFRKLFSGLEDIRVLRTRNLPDVIPIYPPIGYSEVGDEFPIDTRKSPYMKSPGNLATFHCLEGYLHGVAGTQGTNKADLFRLDVERAIGLVNKSVDGLKDECMVPGKWRVLKNKGMAQQDDGSWELVDHEIDDNEDLDF</sequence>
<reference key="1">
    <citation type="journal article" date="1999" name="Nature">
        <title>Sequence and analysis of chromosome 4 of the plant Arabidopsis thaliana.</title>
        <authorList>
            <person name="Mayer K.F.X."/>
            <person name="Schueller C."/>
            <person name="Wambutt R."/>
            <person name="Murphy G."/>
            <person name="Volckaert G."/>
            <person name="Pohl T."/>
            <person name="Duesterhoeft A."/>
            <person name="Stiekema W."/>
            <person name="Entian K.-D."/>
            <person name="Terryn N."/>
            <person name="Harris B."/>
            <person name="Ansorge W."/>
            <person name="Brandt P."/>
            <person name="Grivell L.A."/>
            <person name="Rieger M."/>
            <person name="Weichselgartner M."/>
            <person name="de Simone V."/>
            <person name="Obermaier B."/>
            <person name="Mache R."/>
            <person name="Mueller M."/>
            <person name="Kreis M."/>
            <person name="Delseny M."/>
            <person name="Puigdomenech P."/>
            <person name="Watson M."/>
            <person name="Schmidtheini T."/>
            <person name="Reichert B."/>
            <person name="Portetelle D."/>
            <person name="Perez-Alonso M."/>
            <person name="Boutry M."/>
            <person name="Bancroft I."/>
            <person name="Vos P."/>
            <person name="Hoheisel J."/>
            <person name="Zimmermann W."/>
            <person name="Wedler H."/>
            <person name="Ridley P."/>
            <person name="Langham S.-A."/>
            <person name="McCullagh B."/>
            <person name="Bilham L."/>
            <person name="Robben J."/>
            <person name="van der Schueren J."/>
            <person name="Grymonprez B."/>
            <person name="Chuang Y.-J."/>
            <person name="Vandenbussche F."/>
            <person name="Braeken M."/>
            <person name="Weltjens I."/>
            <person name="Voet M."/>
            <person name="Bastiaens I."/>
            <person name="Aert R."/>
            <person name="Defoor E."/>
            <person name="Weitzenegger T."/>
            <person name="Bothe G."/>
            <person name="Ramsperger U."/>
            <person name="Hilbert H."/>
            <person name="Braun M."/>
            <person name="Holzer E."/>
            <person name="Brandt A."/>
            <person name="Peters S."/>
            <person name="van Staveren M."/>
            <person name="Dirkse W."/>
            <person name="Mooijman P."/>
            <person name="Klein Lankhorst R."/>
            <person name="Rose M."/>
            <person name="Hauf J."/>
            <person name="Koetter P."/>
            <person name="Berneiser S."/>
            <person name="Hempel S."/>
            <person name="Feldpausch M."/>
            <person name="Lamberth S."/>
            <person name="Van den Daele H."/>
            <person name="De Keyser A."/>
            <person name="Buysshaert C."/>
            <person name="Gielen J."/>
            <person name="Villarroel R."/>
            <person name="De Clercq R."/>
            <person name="van Montagu M."/>
            <person name="Rogers J."/>
            <person name="Cronin A."/>
            <person name="Quail M.A."/>
            <person name="Bray-Allen S."/>
            <person name="Clark L."/>
            <person name="Doggett J."/>
            <person name="Hall S."/>
            <person name="Kay M."/>
            <person name="Lennard N."/>
            <person name="McLay K."/>
            <person name="Mayes R."/>
            <person name="Pettett A."/>
            <person name="Rajandream M.A."/>
            <person name="Lyne M."/>
            <person name="Benes V."/>
            <person name="Rechmann S."/>
            <person name="Borkova D."/>
            <person name="Bloecker H."/>
            <person name="Scharfe M."/>
            <person name="Grimm M."/>
            <person name="Loehnert T.-H."/>
            <person name="Dose S."/>
            <person name="de Haan M."/>
            <person name="Maarse A.C."/>
            <person name="Schaefer M."/>
            <person name="Mueller-Auer S."/>
            <person name="Gabel C."/>
            <person name="Fuchs M."/>
            <person name="Fartmann B."/>
            <person name="Granderath K."/>
            <person name="Dauner D."/>
            <person name="Herzl A."/>
            <person name="Neumann S."/>
            <person name="Argiriou A."/>
            <person name="Vitale D."/>
            <person name="Liguori R."/>
            <person name="Piravandi E."/>
            <person name="Massenet O."/>
            <person name="Quigley F."/>
            <person name="Clabauld G."/>
            <person name="Muendlein A."/>
            <person name="Felber R."/>
            <person name="Schnabl S."/>
            <person name="Hiller R."/>
            <person name="Schmidt W."/>
            <person name="Lecharny A."/>
            <person name="Aubourg S."/>
            <person name="Chefdor F."/>
            <person name="Cooke R."/>
            <person name="Berger C."/>
            <person name="Monfort A."/>
            <person name="Casacuberta E."/>
            <person name="Gibbons T."/>
            <person name="Weber N."/>
            <person name="Vandenbol M."/>
            <person name="Bargues M."/>
            <person name="Terol J."/>
            <person name="Torres A."/>
            <person name="Perez-Perez A."/>
            <person name="Purnelle B."/>
            <person name="Bent E."/>
            <person name="Johnson S."/>
            <person name="Tacon D."/>
            <person name="Jesse T."/>
            <person name="Heijnen L."/>
            <person name="Schwarz S."/>
            <person name="Scholler P."/>
            <person name="Heber S."/>
            <person name="Francs P."/>
            <person name="Bielke C."/>
            <person name="Frishman D."/>
            <person name="Haase D."/>
            <person name="Lemcke K."/>
            <person name="Mewes H.-W."/>
            <person name="Stocker S."/>
            <person name="Zaccaria P."/>
            <person name="Bevan M."/>
            <person name="Wilson R.K."/>
            <person name="de la Bastide M."/>
            <person name="Habermann K."/>
            <person name="Parnell L."/>
            <person name="Dedhia N."/>
            <person name="Gnoj L."/>
            <person name="Schutz K."/>
            <person name="Huang E."/>
            <person name="Spiegel L."/>
            <person name="Sekhon M."/>
            <person name="Murray J."/>
            <person name="Sheet P."/>
            <person name="Cordes M."/>
            <person name="Abu-Threideh J."/>
            <person name="Stoneking T."/>
            <person name="Kalicki J."/>
            <person name="Graves T."/>
            <person name="Harmon G."/>
            <person name="Edwards J."/>
            <person name="Latreille P."/>
            <person name="Courtney L."/>
            <person name="Cloud J."/>
            <person name="Abbott A."/>
            <person name="Scott K."/>
            <person name="Johnson D."/>
            <person name="Minx P."/>
            <person name="Bentley D."/>
            <person name="Fulton B."/>
            <person name="Miller N."/>
            <person name="Greco T."/>
            <person name="Kemp K."/>
            <person name="Kramer J."/>
            <person name="Fulton L."/>
            <person name="Mardis E."/>
            <person name="Dante M."/>
            <person name="Pepin K."/>
            <person name="Hillier L.W."/>
            <person name="Nelson J."/>
            <person name="Spieth J."/>
            <person name="Ryan E."/>
            <person name="Andrews S."/>
            <person name="Geisel C."/>
            <person name="Layman D."/>
            <person name="Du H."/>
            <person name="Ali J."/>
            <person name="Berghoff A."/>
            <person name="Jones K."/>
            <person name="Drone K."/>
            <person name="Cotton M."/>
            <person name="Joshu C."/>
            <person name="Antonoiu B."/>
            <person name="Zidanic M."/>
            <person name="Strong C."/>
            <person name="Sun H."/>
            <person name="Lamar B."/>
            <person name="Yordan C."/>
            <person name="Ma P."/>
            <person name="Zhong J."/>
            <person name="Preston R."/>
            <person name="Vil D."/>
            <person name="Shekher M."/>
            <person name="Matero A."/>
            <person name="Shah R."/>
            <person name="Swaby I.K."/>
            <person name="O'Shaughnessy A."/>
            <person name="Rodriguez M."/>
            <person name="Hoffman J."/>
            <person name="Till S."/>
            <person name="Granat S."/>
            <person name="Shohdy N."/>
            <person name="Hasegawa A."/>
            <person name="Hameed A."/>
            <person name="Lodhi M."/>
            <person name="Johnson A."/>
            <person name="Chen E."/>
            <person name="Marra M.A."/>
            <person name="Martienssen R."/>
            <person name="McCombie W.R."/>
        </authorList>
    </citation>
    <scope>NUCLEOTIDE SEQUENCE [LARGE SCALE GENOMIC DNA]</scope>
    <source>
        <strain>cv. Columbia</strain>
    </source>
</reference>
<reference key="2">
    <citation type="journal article" date="2017" name="Plant J.">
        <title>Araport11: a complete reannotation of the Arabidopsis thaliana reference genome.</title>
        <authorList>
            <person name="Cheng C.Y."/>
            <person name="Krishnakumar V."/>
            <person name="Chan A.P."/>
            <person name="Thibaud-Nissen F."/>
            <person name="Schobel S."/>
            <person name="Town C.D."/>
        </authorList>
    </citation>
    <scope>GENOME REANNOTATION</scope>
    <source>
        <strain>cv. Columbia</strain>
    </source>
</reference>
<reference key="3">
    <citation type="submission" date="2007-01" db="EMBL/GenBank/DDBJ databases">
        <title>Arabidopsis ORF clones.</title>
        <authorList>
            <person name="Bautista V.R."/>
            <person name="Kim C.J."/>
            <person name="Chen H."/>
            <person name="Wu S.Y."/>
            <person name="De Los Reyes C."/>
            <person name="Ecker J.R."/>
        </authorList>
    </citation>
    <scope>NUCLEOTIDE SEQUENCE [LARGE SCALE MRNA]</scope>
    <source>
        <strain>cv. Columbia</strain>
    </source>
</reference>
<reference key="4">
    <citation type="journal article" date="2002" name="Science">
        <title>Functional annotation of a full-length Arabidopsis cDNA collection.</title>
        <authorList>
            <person name="Seki M."/>
            <person name="Narusaka M."/>
            <person name="Kamiya A."/>
            <person name="Ishida J."/>
            <person name="Satou M."/>
            <person name="Sakurai T."/>
            <person name="Nakajima M."/>
            <person name="Enju A."/>
            <person name="Akiyama K."/>
            <person name="Oono Y."/>
            <person name="Muramatsu M."/>
            <person name="Hayashizaki Y."/>
            <person name="Kawai J."/>
            <person name="Carninci P."/>
            <person name="Itoh M."/>
            <person name="Ishii Y."/>
            <person name="Arakawa T."/>
            <person name="Shibata K."/>
            <person name="Shinagawa A."/>
            <person name="Shinozaki K."/>
        </authorList>
    </citation>
    <scope>NUCLEOTIDE SEQUENCE [LARGE SCALE MRNA] OF 310-419</scope>
    <source>
        <strain>cv. Columbia</strain>
    </source>
</reference>
<reference key="5">
    <citation type="journal article" date="2004" name="Trends Plant Sci.">
        <title>Phospholipid-derived signaling mediated by phospholipase A in plants.</title>
        <authorList>
            <person name="Ryu S.B."/>
        </authorList>
    </citation>
    <scope>GENE FAMILY</scope>
    <scope>NOMENCLATURE</scope>
</reference>
<reference key="6">
    <citation type="journal article" date="2011" name="J. Plant Physiol.">
        <title>AtDSEL, an Arabidopsis cytosolic DAD1-like acylhydrolase, is involved in negative regulation of storage oil mobilization during seedling establishment.</title>
        <authorList>
            <person name="Kim E.Y."/>
            <person name="Seo Y.S."/>
            <person name="Kim W.T."/>
        </authorList>
    </citation>
    <scope>FUNCTION</scope>
    <scope>DISRUPTION PHENOTYPE</scope>
    <scope>TISSUE SPECIFICITY</scope>
    <scope>BIOPHYSICOCHEMICAL PROPERTIES</scope>
    <scope>SUBCELLULAR LOCATION</scope>
    <source>
        <strain>cv. Columbia</strain>
        <strain>cv. Landsberg erecta</strain>
    </source>
</reference>
<protein>
    <recommendedName>
        <fullName>Phospholipase A1-IIgamma</fullName>
        <ecNumber>3.1.1.-</ecNumber>
    </recommendedName>
    <alternativeName>
        <fullName>DAD1-like seedling establishment-related lipase</fullName>
        <shortName>AtDSEL</shortName>
        <shortName>Phospholipase DSEL</shortName>
    </alternativeName>
</protein>
<organism>
    <name type="scientific">Arabidopsis thaliana</name>
    <name type="common">Mouse-ear cress</name>
    <dbReference type="NCBI Taxonomy" id="3702"/>
    <lineage>
        <taxon>Eukaryota</taxon>
        <taxon>Viridiplantae</taxon>
        <taxon>Streptophyta</taxon>
        <taxon>Embryophyta</taxon>
        <taxon>Tracheophyta</taxon>
        <taxon>Spermatophyta</taxon>
        <taxon>Magnoliopsida</taxon>
        <taxon>eudicotyledons</taxon>
        <taxon>Gunneridae</taxon>
        <taxon>Pentapetalae</taxon>
        <taxon>rosids</taxon>
        <taxon>malvids</taxon>
        <taxon>Brassicales</taxon>
        <taxon>Brassicaceae</taxon>
        <taxon>Camelineae</taxon>
        <taxon>Arabidopsis</taxon>
    </lineage>
</organism>
<comment type="function">
    <text evidence="3">Acylhydrolase that catalyzes the hydrolysis of 1,3-diacylglycerol (1,3-DAG) and 1-monoacylglycerol (1-MAG) at the sn-1 position. High activity toward 1,3-DAG and 1-MAG, but low activity toward 1,2-diacylglycerol (1,2-DAG) and 1-lysophosphatidylcholine (1-LPC), and no activity toward phosphatidylcholine (PC), monogalactosyldiacylglycerol (MGDG), digalactosyldiacylglycerol (DGDG), triacylglycerol (TAG) and 2-monoacylglycerol (2-MAG). May be involved in the negative regulation of seedling establishment by inhibiting the breakdown, beta-oxidation and mobilization of seed storage oils.</text>
</comment>
<comment type="biophysicochemical properties">
    <phDependence>
        <text evidence="3">Optimum pH is 5-6 with 1,3-DAG as substrate and at 30 degrees Celsius.</text>
    </phDependence>
</comment>
<comment type="subcellular location">
    <subcellularLocation>
        <location evidence="3">Cytoplasm</location>
    </subcellularLocation>
</comment>
<comment type="tissue specificity">
    <text evidence="3">Expressed in seedlings, stems and siliques, and, to a lower extent, in flowers.</text>
</comment>
<comment type="disruption phenotype">
    <text evidence="3">Mildly fast-growing seedlings regardless of the presence of an exogenous carbon source, accompanied by a better beta-oxidation and mobilization of seed storage oils.</text>
</comment>
<comment type="similarity">
    <text evidence="4">Belongs to the AB hydrolase superfamily. Lipase family.</text>
</comment>
<comment type="sequence caution" evidence="4">
    <conflict type="erroneous initiation">
        <sequence resource="EMBL-CDS" id="BAC42692"/>
    </conflict>
    <text>Truncated N-terminus.</text>
</comment>
<gene>
    <name type="primary">DSEL</name>
    <name type="ordered locus">At4g18550</name>
    <name type="ORF">F28J12.210</name>
</gene>
<evidence type="ECO:0000250" key="1"/>
<evidence type="ECO:0000255" key="2"/>
<evidence type="ECO:0000269" key="3">
    <source>
    </source>
</evidence>
<evidence type="ECO:0000305" key="4"/>
<evidence type="ECO:0007829" key="5">
    <source>
        <dbReference type="PDB" id="7X0C"/>
    </source>
</evidence>